<feature type="chain" id="PRO_1000054727" description="Large ribosomal subunit protein uL16">
    <location>
        <begin position="1"/>
        <end position="142"/>
    </location>
</feature>
<evidence type="ECO:0000255" key="1">
    <source>
        <dbReference type="HAMAP-Rule" id="MF_01342"/>
    </source>
</evidence>
<evidence type="ECO:0000305" key="2"/>
<accession>A5IM90</accession>
<protein>
    <recommendedName>
        <fullName evidence="1">Large ribosomal subunit protein uL16</fullName>
    </recommendedName>
    <alternativeName>
        <fullName evidence="2">50S ribosomal protein L16</fullName>
    </alternativeName>
</protein>
<comment type="function">
    <text evidence="1">Binds 23S rRNA and is also seen to make contacts with the A and possibly P site tRNAs.</text>
</comment>
<comment type="subunit">
    <text evidence="1">Part of the 50S ribosomal subunit.</text>
</comment>
<comment type="similarity">
    <text evidence="1">Belongs to the universal ribosomal protein uL16 family.</text>
</comment>
<reference key="1">
    <citation type="submission" date="2007-05" db="EMBL/GenBank/DDBJ databases">
        <title>Complete sequence of Thermotoga petrophila RKU-1.</title>
        <authorList>
            <consortium name="US DOE Joint Genome Institute"/>
            <person name="Copeland A."/>
            <person name="Lucas S."/>
            <person name="Lapidus A."/>
            <person name="Barry K."/>
            <person name="Glavina del Rio T."/>
            <person name="Dalin E."/>
            <person name="Tice H."/>
            <person name="Pitluck S."/>
            <person name="Sims D."/>
            <person name="Brettin T."/>
            <person name="Bruce D."/>
            <person name="Detter J.C."/>
            <person name="Han C."/>
            <person name="Tapia R."/>
            <person name="Schmutz J."/>
            <person name="Larimer F."/>
            <person name="Land M."/>
            <person name="Hauser L."/>
            <person name="Kyrpides N."/>
            <person name="Mikhailova N."/>
            <person name="Nelson K."/>
            <person name="Gogarten J.P."/>
            <person name="Noll K."/>
            <person name="Richardson P."/>
        </authorList>
    </citation>
    <scope>NUCLEOTIDE SEQUENCE [LARGE SCALE GENOMIC DNA]</scope>
    <source>
        <strain>ATCC BAA-488 / DSM 13995 / JCM 10881 / RKU-1</strain>
    </source>
</reference>
<gene>
    <name evidence="1" type="primary">rplP</name>
    <name type="ordered locus">Tpet_1299</name>
</gene>
<name>RL16_THEP1</name>
<sequence length="142" mass="15936">MLMPRRVKYRKQQRGRMKGKAKGGTFVQFGEWGLKALEPAWITAQQIEACRIAMLRAMKRSGKIWIRIFPDKPYTKKPPESRMGKGKGNVEGWVAVVKPGKILFEVAGVDEETAHEALRYAASKLPIATKVVPRHHIGGEAV</sequence>
<keyword id="KW-0687">Ribonucleoprotein</keyword>
<keyword id="KW-0689">Ribosomal protein</keyword>
<keyword id="KW-0694">RNA-binding</keyword>
<keyword id="KW-0699">rRNA-binding</keyword>
<keyword id="KW-0820">tRNA-binding</keyword>
<dbReference type="EMBL" id="CP000702">
    <property type="protein sequence ID" value="ABQ47313.1"/>
    <property type="molecule type" value="Genomic_DNA"/>
</dbReference>
<dbReference type="RefSeq" id="WP_011943789.1">
    <property type="nucleotide sequence ID" value="NC_009486.1"/>
</dbReference>
<dbReference type="SMR" id="A5IM90"/>
<dbReference type="STRING" id="390874.Tpet_1299"/>
<dbReference type="KEGG" id="tpt:Tpet_1299"/>
<dbReference type="eggNOG" id="COG0197">
    <property type="taxonomic scope" value="Bacteria"/>
</dbReference>
<dbReference type="HOGENOM" id="CLU_078858_2_1_0"/>
<dbReference type="Proteomes" id="UP000006558">
    <property type="component" value="Chromosome"/>
</dbReference>
<dbReference type="GO" id="GO:0022625">
    <property type="term" value="C:cytosolic large ribosomal subunit"/>
    <property type="evidence" value="ECO:0007669"/>
    <property type="project" value="TreeGrafter"/>
</dbReference>
<dbReference type="GO" id="GO:0019843">
    <property type="term" value="F:rRNA binding"/>
    <property type="evidence" value="ECO:0007669"/>
    <property type="project" value="UniProtKB-UniRule"/>
</dbReference>
<dbReference type="GO" id="GO:0003735">
    <property type="term" value="F:structural constituent of ribosome"/>
    <property type="evidence" value="ECO:0007669"/>
    <property type="project" value="InterPro"/>
</dbReference>
<dbReference type="GO" id="GO:0000049">
    <property type="term" value="F:tRNA binding"/>
    <property type="evidence" value="ECO:0007669"/>
    <property type="project" value="UniProtKB-KW"/>
</dbReference>
<dbReference type="GO" id="GO:0006412">
    <property type="term" value="P:translation"/>
    <property type="evidence" value="ECO:0007669"/>
    <property type="project" value="UniProtKB-UniRule"/>
</dbReference>
<dbReference type="CDD" id="cd01433">
    <property type="entry name" value="Ribosomal_L16_L10e"/>
    <property type="match status" value="1"/>
</dbReference>
<dbReference type="FunFam" id="3.90.1170.10:FF:000001">
    <property type="entry name" value="50S ribosomal protein L16"/>
    <property type="match status" value="1"/>
</dbReference>
<dbReference type="Gene3D" id="3.90.1170.10">
    <property type="entry name" value="Ribosomal protein L10e/L16"/>
    <property type="match status" value="1"/>
</dbReference>
<dbReference type="HAMAP" id="MF_01342">
    <property type="entry name" value="Ribosomal_uL16"/>
    <property type="match status" value="1"/>
</dbReference>
<dbReference type="InterPro" id="IPR047873">
    <property type="entry name" value="Ribosomal_uL16"/>
</dbReference>
<dbReference type="InterPro" id="IPR000114">
    <property type="entry name" value="Ribosomal_uL16_bact-type"/>
</dbReference>
<dbReference type="InterPro" id="IPR020798">
    <property type="entry name" value="Ribosomal_uL16_CS"/>
</dbReference>
<dbReference type="InterPro" id="IPR016180">
    <property type="entry name" value="Ribosomal_uL16_dom"/>
</dbReference>
<dbReference type="InterPro" id="IPR036920">
    <property type="entry name" value="Ribosomal_uL16_sf"/>
</dbReference>
<dbReference type="NCBIfam" id="TIGR01164">
    <property type="entry name" value="rplP_bact"/>
    <property type="match status" value="1"/>
</dbReference>
<dbReference type="PANTHER" id="PTHR12220">
    <property type="entry name" value="50S/60S RIBOSOMAL PROTEIN L16"/>
    <property type="match status" value="1"/>
</dbReference>
<dbReference type="PANTHER" id="PTHR12220:SF13">
    <property type="entry name" value="LARGE RIBOSOMAL SUBUNIT PROTEIN UL16M"/>
    <property type="match status" value="1"/>
</dbReference>
<dbReference type="Pfam" id="PF00252">
    <property type="entry name" value="Ribosomal_L16"/>
    <property type="match status" value="1"/>
</dbReference>
<dbReference type="PRINTS" id="PR00060">
    <property type="entry name" value="RIBOSOMALL16"/>
</dbReference>
<dbReference type="SUPFAM" id="SSF54686">
    <property type="entry name" value="Ribosomal protein L16p/L10e"/>
    <property type="match status" value="1"/>
</dbReference>
<dbReference type="PROSITE" id="PS00586">
    <property type="entry name" value="RIBOSOMAL_L16_1"/>
    <property type="match status" value="1"/>
</dbReference>
<dbReference type="PROSITE" id="PS00701">
    <property type="entry name" value="RIBOSOMAL_L16_2"/>
    <property type="match status" value="1"/>
</dbReference>
<proteinExistence type="inferred from homology"/>
<organism>
    <name type="scientific">Thermotoga petrophila (strain ATCC BAA-488 / DSM 13995 / JCM 10881 / RKU-1)</name>
    <dbReference type="NCBI Taxonomy" id="390874"/>
    <lineage>
        <taxon>Bacteria</taxon>
        <taxon>Thermotogati</taxon>
        <taxon>Thermotogota</taxon>
        <taxon>Thermotogae</taxon>
        <taxon>Thermotogales</taxon>
        <taxon>Thermotogaceae</taxon>
        <taxon>Thermotoga</taxon>
    </lineage>
</organism>